<keyword id="KW-0131">Cell cycle</keyword>
<keyword id="KW-0132">Cell division</keyword>
<keyword id="KW-0963">Cytoplasm</keyword>
<keyword id="KW-0469">Meiosis</keyword>
<keyword id="KW-1185">Reference proteome</keyword>
<keyword id="KW-0717">Septation</keyword>
<proteinExistence type="evidence at protein level"/>
<dbReference type="EMBL" id="CU329670">
    <property type="protein sequence ID" value="CAA93698.1"/>
    <property type="molecule type" value="Genomic_DNA"/>
</dbReference>
<dbReference type="PIR" id="T38647">
    <property type="entry name" value="T38647"/>
</dbReference>
<dbReference type="RefSeq" id="NP_593774.1">
    <property type="nucleotide sequence ID" value="NM_001019203.2"/>
</dbReference>
<dbReference type="BioGRID" id="278982">
    <property type="interactions" value="1"/>
</dbReference>
<dbReference type="STRING" id="284812.Q10326"/>
<dbReference type="PaxDb" id="4896-SPAC32A11.01.1"/>
<dbReference type="EnsemblFungi" id="SPAC32A11.01.1">
    <property type="protein sequence ID" value="SPAC32A11.01.1:pep"/>
    <property type="gene ID" value="SPAC32A11.01"/>
</dbReference>
<dbReference type="GeneID" id="2542524"/>
<dbReference type="KEGG" id="spo:2542524"/>
<dbReference type="PomBase" id="SPAC32A11.01">
    <property type="gene designation" value="mug8"/>
</dbReference>
<dbReference type="VEuPathDB" id="FungiDB:SPAC32A11.01"/>
<dbReference type="eggNOG" id="ENOG502RBV5">
    <property type="taxonomic scope" value="Eukaryota"/>
</dbReference>
<dbReference type="HOGENOM" id="CLU_384099_0_0_1"/>
<dbReference type="InParanoid" id="Q10326"/>
<dbReference type="OMA" id="YWESIAF"/>
<dbReference type="PRO" id="PR:Q10326"/>
<dbReference type="Proteomes" id="UP000002485">
    <property type="component" value="Chromosome I"/>
</dbReference>
<dbReference type="GO" id="GO:0032153">
    <property type="term" value="C:cell division site"/>
    <property type="evidence" value="ECO:0007005"/>
    <property type="project" value="PomBase"/>
</dbReference>
<dbReference type="GO" id="GO:0005829">
    <property type="term" value="C:cytosol"/>
    <property type="evidence" value="ECO:0007005"/>
    <property type="project" value="PomBase"/>
</dbReference>
<dbReference type="GO" id="GO:0000917">
    <property type="term" value="P:division septum assembly"/>
    <property type="evidence" value="ECO:0007669"/>
    <property type="project" value="UniProtKB-KW"/>
</dbReference>
<dbReference type="GO" id="GO:0051321">
    <property type="term" value="P:meiotic cell cycle"/>
    <property type="evidence" value="ECO:0007669"/>
    <property type="project" value="UniProtKB-KW"/>
</dbReference>
<dbReference type="InterPro" id="IPR037508">
    <property type="entry name" value="Msb1/Mug8"/>
</dbReference>
<dbReference type="InterPro" id="IPR012965">
    <property type="entry name" value="Msb1/Mug8_dom"/>
</dbReference>
<dbReference type="PANTHER" id="PTHR28093">
    <property type="entry name" value="MORPHOGENESIS-RELATED PROTEIN MSB1"/>
    <property type="match status" value="1"/>
</dbReference>
<dbReference type="PANTHER" id="PTHR28093:SF1">
    <property type="entry name" value="MORPHOGENESIS-RELATED PROTEIN MSB1"/>
    <property type="match status" value="1"/>
</dbReference>
<dbReference type="Pfam" id="PF08101">
    <property type="entry name" value="Msb1-Mug8_dom"/>
    <property type="match status" value="1"/>
</dbReference>
<protein>
    <recommendedName>
        <fullName>Meiotically up-regulated gene 8 protein</fullName>
    </recommendedName>
</protein>
<organism>
    <name type="scientific">Schizosaccharomyces pombe (strain 972 / ATCC 24843)</name>
    <name type="common">Fission yeast</name>
    <dbReference type="NCBI Taxonomy" id="284812"/>
    <lineage>
        <taxon>Eukaryota</taxon>
        <taxon>Fungi</taxon>
        <taxon>Dikarya</taxon>
        <taxon>Ascomycota</taxon>
        <taxon>Taphrinomycotina</taxon>
        <taxon>Schizosaccharomycetes</taxon>
        <taxon>Schizosaccharomycetales</taxon>
        <taxon>Schizosaccharomycetaceae</taxon>
        <taxon>Schizosaccharomyces</taxon>
    </lineage>
</organism>
<name>MUG8_SCHPO</name>
<gene>
    <name type="primary">mug8</name>
    <name type="ORF">SPAC32A11.01</name>
</gene>
<feature type="chain" id="PRO_0000116593" description="Meiotically up-regulated gene 8 protein">
    <location>
        <begin position="1"/>
        <end position="720"/>
    </location>
</feature>
<comment type="function">
    <text evidence="1">Has a role in meiosis and septation.</text>
</comment>
<comment type="subcellular location">
    <subcellularLocation>
        <location evidence="2">Cytoplasm</location>
    </subcellularLocation>
    <text>Localizes to the barrier septum.</text>
</comment>
<sequence length="720" mass="82456">MSRSICTLTCILPTFSMDYWNQECVELSQVENLFTELASRLELLEMNSKNVLYRLTIGTNPDRNWEAIAFIREFFDSAKHGYVIPKHEIRNRIRLLSEASLISCLRWLLHRIPGGVITWSTYKLFDEAETRANYPVRGFDIFMKHATKHSCHFNILKCFLKLLMSLSAKLAVSSNSSTVSSLELVSQIASIWAFDWPMMNLQETFIYWDRCTNACLRLLLCYIRYTNKSSETGFSCLPSALQSQLQSFNYPPSLKKLNDAKAHVFTFSMNYYMTRDPLEMIQIVTKMNIPDHLTATLPRSSDDIQNDCLFALRQVSKRSSYHSVFSAQESAWTDFIKNGFDHPILPTCTQETVYSLLTGNDTACVYPFPNKPYRLPDVDFEIFSHCSFESLTTVTTNTNIWWVWAESRCTEIPESKRTVFPNCTMLIDKTGRLIILQQTVPQKPVALTASSNKRKNRIFGKIRRSFKRILKPRKINKTVKIMSNSQRRSCQSVLSEGNRTILLHLADQMNACSLQTKSRESIKTLKLIEEKDEYWEPETAGYFNTIVGWADQRKSLYDEAVIKINHSNMLNTLPPTSQGATSTTVSSASSNFLSSSCTPIDDTNSVTGSTLSCSFDEMKLSDKIDDANSLKDDDFIQGSKKDFFEMNLNHSSYQNKDELKPFQLLVKHAFKPPSYRLIRPPLRDWQSSDTLSSEMSKSISSSRSSPFSLEQTISKIQNKL</sequence>
<accession>Q10326</accession>
<evidence type="ECO:0000269" key="1">
    <source>
    </source>
</evidence>
<evidence type="ECO:0000269" key="2">
    <source>
    </source>
</evidence>
<reference key="1">
    <citation type="journal article" date="2002" name="Nature">
        <title>The genome sequence of Schizosaccharomyces pombe.</title>
        <authorList>
            <person name="Wood V."/>
            <person name="Gwilliam R."/>
            <person name="Rajandream M.A."/>
            <person name="Lyne M.H."/>
            <person name="Lyne R."/>
            <person name="Stewart A."/>
            <person name="Sgouros J.G."/>
            <person name="Peat N."/>
            <person name="Hayles J."/>
            <person name="Baker S.G."/>
            <person name="Basham D."/>
            <person name="Bowman S."/>
            <person name="Brooks K."/>
            <person name="Brown D."/>
            <person name="Brown S."/>
            <person name="Chillingworth T."/>
            <person name="Churcher C.M."/>
            <person name="Collins M."/>
            <person name="Connor R."/>
            <person name="Cronin A."/>
            <person name="Davis P."/>
            <person name="Feltwell T."/>
            <person name="Fraser A."/>
            <person name="Gentles S."/>
            <person name="Goble A."/>
            <person name="Hamlin N."/>
            <person name="Harris D.E."/>
            <person name="Hidalgo J."/>
            <person name="Hodgson G."/>
            <person name="Holroyd S."/>
            <person name="Hornsby T."/>
            <person name="Howarth S."/>
            <person name="Huckle E.J."/>
            <person name="Hunt S."/>
            <person name="Jagels K."/>
            <person name="James K.D."/>
            <person name="Jones L."/>
            <person name="Jones M."/>
            <person name="Leather S."/>
            <person name="McDonald S."/>
            <person name="McLean J."/>
            <person name="Mooney P."/>
            <person name="Moule S."/>
            <person name="Mungall K.L."/>
            <person name="Murphy L.D."/>
            <person name="Niblett D."/>
            <person name="Odell C."/>
            <person name="Oliver K."/>
            <person name="O'Neil S."/>
            <person name="Pearson D."/>
            <person name="Quail M.A."/>
            <person name="Rabbinowitsch E."/>
            <person name="Rutherford K.M."/>
            <person name="Rutter S."/>
            <person name="Saunders D."/>
            <person name="Seeger K."/>
            <person name="Sharp S."/>
            <person name="Skelton J."/>
            <person name="Simmonds M.N."/>
            <person name="Squares R."/>
            <person name="Squares S."/>
            <person name="Stevens K."/>
            <person name="Taylor K."/>
            <person name="Taylor R.G."/>
            <person name="Tivey A."/>
            <person name="Walsh S.V."/>
            <person name="Warren T."/>
            <person name="Whitehead S."/>
            <person name="Woodward J.R."/>
            <person name="Volckaert G."/>
            <person name="Aert R."/>
            <person name="Robben J."/>
            <person name="Grymonprez B."/>
            <person name="Weltjens I."/>
            <person name="Vanstreels E."/>
            <person name="Rieger M."/>
            <person name="Schaefer M."/>
            <person name="Mueller-Auer S."/>
            <person name="Gabel C."/>
            <person name="Fuchs M."/>
            <person name="Duesterhoeft A."/>
            <person name="Fritzc C."/>
            <person name="Holzer E."/>
            <person name="Moestl D."/>
            <person name="Hilbert H."/>
            <person name="Borzym K."/>
            <person name="Langer I."/>
            <person name="Beck A."/>
            <person name="Lehrach H."/>
            <person name="Reinhardt R."/>
            <person name="Pohl T.M."/>
            <person name="Eger P."/>
            <person name="Zimmermann W."/>
            <person name="Wedler H."/>
            <person name="Wambutt R."/>
            <person name="Purnelle B."/>
            <person name="Goffeau A."/>
            <person name="Cadieu E."/>
            <person name="Dreano S."/>
            <person name="Gloux S."/>
            <person name="Lelaure V."/>
            <person name="Mottier S."/>
            <person name="Galibert F."/>
            <person name="Aves S.J."/>
            <person name="Xiang Z."/>
            <person name="Hunt C."/>
            <person name="Moore K."/>
            <person name="Hurst S.M."/>
            <person name="Lucas M."/>
            <person name="Rochet M."/>
            <person name="Gaillardin C."/>
            <person name="Tallada V.A."/>
            <person name="Garzon A."/>
            <person name="Thode G."/>
            <person name="Daga R.R."/>
            <person name="Cruzado L."/>
            <person name="Jimenez J."/>
            <person name="Sanchez M."/>
            <person name="del Rey F."/>
            <person name="Benito J."/>
            <person name="Dominguez A."/>
            <person name="Revuelta J.L."/>
            <person name="Moreno S."/>
            <person name="Armstrong J."/>
            <person name="Forsburg S.L."/>
            <person name="Cerutti L."/>
            <person name="Lowe T."/>
            <person name="McCombie W.R."/>
            <person name="Paulsen I."/>
            <person name="Potashkin J."/>
            <person name="Shpakovski G.V."/>
            <person name="Ussery D."/>
            <person name="Barrell B.G."/>
            <person name="Nurse P."/>
        </authorList>
    </citation>
    <scope>NUCLEOTIDE SEQUENCE [LARGE SCALE GENOMIC DNA]</scope>
    <source>
        <strain>972 / ATCC 24843</strain>
    </source>
</reference>
<reference key="2">
    <citation type="journal article" date="2005" name="Curr. Biol.">
        <title>A large-scale screen in S. pombe identifies seven novel genes required for critical meiotic events.</title>
        <authorList>
            <person name="Martin-Castellanos C."/>
            <person name="Blanco M."/>
            <person name="Rozalen A.E."/>
            <person name="Perez-Hidalgo L."/>
            <person name="Garcia A.I."/>
            <person name="Conde F."/>
            <person name="Mata J."/>
            <person name="Ellermeier C."/>
            <person name="Davis L."/>
            <person name="San-Segundo P."/>
            <person name="Smith G.R."/>
            <person name="Moreno S."/>
        </authorList>
    </citation>
    <scope>FUNCTION IN MEIOSIS</scope>
</reference>
<reference key="3">
    <citation type="journal article" date="2006" name="Nat. Biotechnol.">
        <title>ORFeome cloning and global analysis of protein localization in the fission yeast Schizosaccharomyces pombe.</title>
        <authorList>
            <person name="Matsuyama A."/>
            <person name="Arai R."/>
            <person name="Yashiroda Y."/>
            <person name="Shirai A."/>
            <person name="Kamata A."/>
            <person name="Sekido S."/>
            <person name="Kobayashi Y."/>
            <person name="Hashimoto A."/>
            <person name="Hamamoto M."/>
            <person name="Hiraoka Y."/>
            <person name="Horinouchi S."/>
            <person name="Yoshida M."/>
        </authorList>
    </citation>
    <scope>SUBCELLULAR LOCATION [LARGE SCALE ANALYSIS]</scope>
</reference>